<comment type="function">
    <text evidence="1">Essential for Golgi structural integrity.</text>
</comment>
<comment type="subcellular location">
    <subcellularLocation>
        <location evidence="1">Cell membrane</location>
        <topology evidence="2">Single-pass membrane protein</topology>
    </subcellularLocation>
    <subcellularLocation>
        <location evidence="1">Golgi apparatus</location>
    </subcellularLocation>
</comment>
<name>LYSM3_RAT</name>
<proteinExistence type="evidence at transcript level"/>
<keyword id="KW-1003">Cell membrane</keyword>
<keyword id="KW-0325">Glycoprotein</keyword>
<keyword id="KW-0333">Golgi apparatus</keyword>
<keyword id="KW-0472">Membrane</keyword>
<keyword id="KW-0597">Phosphoprotein</keyword>
<keyword id="KW-1185">Reference proteome</keyword>
<keyword id="KW-0812">Transmembrane</keyword>
<keyword id="KW-1133">Transmembrane helix</keyword>
<protein>
    <recommendedName>
        <fullName>LysM and putative peptidoglycan-binding domain-containing protein 3</fullName>
    </recommendedName>
</protein>
<sequence>MAGRNQNRTASLAGIQASGHVHTFGNCTDNDMLEEDAEVYELRSRGKEKVRRSTSRDRLDDIVILTKDIQEGDTLNAVALQYCCTVADIKRVNNLISDQDFFALRSIKIPVKRFSSLTETLHPLKGRQVLHPPPVPYFQEQDTVPANDSPSSSESAGSFLKEVDRDIEQIVKCTDTKKENLNEVVSALTAQQVRFEPDNKSVHRKDPYYGADWGMGWWTAVVIMLIVGIITPVFYLLYYEILAKVDVSHHSTVDSSHLHPGLTPPSHHREMGNAIGPTKGIPVGQQDDHRLYRQDPQARD</sequence>
<accession>Q5M836</accession>
<gene>
    <name type="primary">Lysmd3</name>
</gene>
<feature type="chain" id="PRO_0000248009" description="LysM and putative peptidoglycan-binding domain-containing protein 3">
    <location>
        <begin position="1"/>
        <end position="300"/>
    </location>
</feature>
<feature type="topological domain" description="Extracellular" evidence="2">
    <location>
        <begin position="1"/>
        <end position="216"/>
    </location>
</feature>
<feature type="transmembrane region" description="Helical" evidence="2">
    <location>
        <begin position="217"/>
        <end position="237"/>
    </location>
</feature>
<feature type="topological domain" description="Cytoplasmic" evidence="2">
    <location>
        <begin position="238"/>
        <end position="300"/>
    </location>
</feature>
<feature type="domain" description="LysM" evidence="3">
    <location>
        <begin position="65"/>
        <end position="109"/>
    </location>
</feature>
<feature type="region of interest" description="Disordered" evidence="4">
    <location>
        <begin position="136"/>
        <end position="157"/>
    </location>
</feature>
<feature type="region of interest" description="Disordered" evidence="4">
    <location>
        <begin position="253"/>
        <end position="300"/>
    </location>
</feature>
<feature type="compositionally biased region" description="Polar residues" evidence="4">
    <location>
        <begin position="140"/>
        <end position="156"/>
    </location>
</feature>
<feature type="compositionally biased region" description="Basic and acidic residues" evidence="4">
    <location>
        <begin position="286"/>
        <end position="300"/>
    </location>
</feature>
<feature type="modified residue" description="Phosphoserine" evidence="1">
    <location>
        <position position="55"/>
    </location>
</feature>
<feature type="glycosylation site" description="N-linked (GlcNAc...) asparagine" evidence="2">
    <location>
        <position position="7"/>
    </location>
</feature>
<feature type="glycosylation site" description="N-linked (GlcNAc...) asparagine" evidence="2">
    <location>
        <position position="26"/>
    </location>
</feature>
<feature type="glycosylation site" description="N-linked (GlcNAc...) asparagine" evidence="2">
    <location>
        <position position="199"/>
    </location>
</feature>
<evidence type="ECO:0000250" key="1">
    <source>
        <dbReference type="UniProtKB" id="Q7Z3D4"/>
    </source>
</evidence>
<evidence type="ECO:0000255" key="2"/>
<evidence type="ECO:0000255" key="3">
    <source>
        <dbReference type="PROSITE-ProRule" id="PRU01118"/>
    </source>
</evidence>
<evidence type="ECO:0000256" key="4">
    <source>
        <dbReference type="SAM" id="MobiDB-lite"/>
    </source>
</evidence>
<organism>
    <name type="scientific">Rattus norvegicus</name>
    <name type="common">Rat</name>
    <dbReference type="NCBI Taxonomy" id="10116"/>
    <lineage>
        <taxon>Eukaryota</taxon>
        <taxon>Metazoa</taxon>
        <taxon>Chordata</taxon>
        <taxon>Craniata</taxon>
        <taxon>Vertebrata</taxon>
        <taxon>Euteleostomi</taxon>
        <taxon>Mammalia</taxon>
        <taxon>Eutheria</taxon>
        <taxon>Euarchontoglires</taxon>
        <taxon>Glires</taxon>
        <taxon>Rodentia</taxon>
        <taxon>Myomorpha</taxon>
        <taxon>Muroidea</taxon>
        <taxon>Muridae</taxon>
        <taxon>Murinae</taxon>
        <taxon>Rattus</taxon>
    </lineage>
</organism>
<dbReference type="EMBL" id="BC088262">
    <property type="protein sequence ID" value="AAH88262.1"/>
    <property type="molecule type" value="mRNA"/>
</dbReference>
<dbReference type="RefSeq" id="NP_001009698.1">
    <property type="nucleotide sequence ID" value="NM_001009698.1"/>
</dbReference>
<dbReference type="SMR" id="Q5M836"/>
<dbReference type="FunCoup" id="Q5M836">
    <property type="interactions" value="1747"/>
</dbReference>
<dbReference type="STRING" id="10116.ENSRNOP00000021818"/>
<dbReference type="GlyCosmos" id="Q5M836">
    <property type="glycosylation" value="3 sites, No reported glycans"/>
</dbReference>
<dbReference type="GlyGen" id="Q5M836">
    <property type="glycosylation" value="4 sites"/>
</dbReference>
<dbReference type="PhosphoSitePlus" id="Q5M836"/>
<dbReference type="PaxDb" id="10116-ENSRNOP00000021818"/>
<dbReference type="Ensembl" id="ENSRNOT00000021818.8">
    <property type="protein sequence ID" value="ENSRNOP00000021818.4"/>
    <property type="gene ID" value="ENSRNOG00000016298.8"/>
</dbReference>
<dbReference type="GeneID" id="315923"/>
<dbReference type="KEGG" id="rno:315923"/>
<dbReference type="UCSC" id="RGD:1308805">
    <property type="organism name" value="rat"/>
</dbReference>
<dbReference type="AGR" id="RGD:1308805"/>
<dbReference type="CTD" id="116068"/>
<dbReference type="RGD" id="1308805">
    <property type="gene designation" value="Lysmd3"/>
</dbReference>
<dbReference type="eggNOG" id="KOG2850">
    <property type="taxonomic scope" value="Eukaryota"/>
</dbReference>
<dbReference type="GeneTree" id="ENSGT00940000158711"/>
<dbReference type="HOGENOM" id="CLU_070676_0_0_1"/>
<dbReference type="InParanoid" id="Q5M836"/>
<dbReference type="OMA" id="IALQFCC"/>
<dbReference type="OrthoDB" id="538216at2759"/>
<dbReference type="PhylomeDB" id="Q5M836"/>
<dbReference type="TreeFam" id="TF326271"/>
<dbReference type="PRO" id="PR:Q5M836"/>
<dbReference type="Proteomes" id="UP000002494">
    <property type="component" value="Chromosome 2"/>
</dbReference>
<dbReference type="Bgee" id="ENSRNOG00000016298">
    <property type="expression patterns" value="Expressed in jejunum and 19 other cell types or tissues"/>
</dbReference>
<dbReference type="GO" id="GO:0005794">
    <property type="term" value="C:Golgi apparatus"/>
    <property type="evidence" value="ECO:0000250"/>
    <property type="project" value="UniProtKB"/>
</dbReference>
<dbReference type="GO" id="GO:0000139">
    <property type="term" value="C:Golgi membrane"/>
    <property type="evidence" value="ECO:0000266"/>
    <property type="project" value="RGD"/>
</dbReference>
<dbReference type="GO" id="GO:0005886">
    <property type="term" value="C:plasma membrane"/>
    <property type="evidence" value="ECO:0000250"/>
    <property type="project" value="UniProtKB"/>
</dbReference>
<dbReference type="GO" id="GO:0042834">
    <property type="term" value="F:peptidoglycan binding"/>
    <property type="evidence" value="ECO:0000266"/>
    <property type="project" value="RGD"/>
</dbReference>
<dbReference type="GO" id="GO:0007030">
    <property type="term" value="P:Golgi organization"/>
    <property type="evidence" value="ECO:0000250"/>
    <property type="project" value="UniProtKB"/>
</dbReference>
<dbReference type="CDD" id="cd00118">
    <property type="entry name" value="LysM"/>
    <property type="match status" value="1"/>
</dbReference>
<dbReference type="Gene3D" id="3.10.350.10">
    <property type="entry name" value="LysM domain"/>
    <property type="match status" value="1"/>
</dbReference>
<dbReference type="InterPro" id="IPR045030">
    <property type="entry name" value="LYSM1-4"/>
</dbReference>
<dbReference type="InterPro" id="IPR018392">
    <property type="entry name" value="LysM_dom"/>
</dbReference>
<dbReference type="InterPro" id="IPR036779">
    <property type="entry name" value="LysM_dom_sf"/>
</dbReference>
<dbReference type="PANTHER" id="PTHR20932:SF5">
    <property type="entry name" value="AND PUTATIVE PEPTIDOGLYCAN-BINDING DOMAIN-CONTAINING PROTEIN 3-RELATED"/>
    <property type="match status" value="1"/>
</dbReference>
<dbReference type="PANTHER" id="PTHR20932">
    <property type="entry name" value="LYSM AND PUTATIVE PEPTIDOGLYCAN-BINDING DOMAIN-CONTAINING PROTEIN"/>
    <property type="match status" value="1"/>
</dbReference>
<dbReference type="Pfam" id="PF01476">
    <property type="entry name" value="LysM"/>
    <property type="match status" value="1"/>
</dbReference>
<dbReference type="SMART" id="SM00257">
    <property type="entry name" value="LysM"/>
    <property type="match status" value="1"/>
</dbReference>
<dbReference type="PROSITE" id="PS51782">
    <property type="entry name" value="LYSM"/>
    <property type="match status" value="1"/>
</dbReference>
<reference key="1">
    <citation type="journal article" date="2004" name="Genome Res.">
        <title>The status, quality, and expansion of the NIH full-length cDNA project: the Mammalian Gene Collection (MGC).</title>
        <authorList>
            <consortium name="The MGC Project Team"/>
        </authorList>
    </citation>
    <scope>NUCLEOTIDE SEQUENCE [LARGE SCALE MRNA]</scope>
    <source>
        <tissue>Spleen</tissue>
    </source>
</reference>